<reference key="1">
    <citation type="submission" date="2007-06" db="EMBL/GenBank/DDBJ databases">
        <title>Complete sequence of chromosome of Staphylococcus aureus subsp. aureus JH1.</title>
        <authorList>
            <consortium name="US DOE Joint Genome Institute"/>
            <person name="Copeland A."/>
            <person name="Lucas S."/>
            <person name="Lapidus A."/>
            <person name="Barry K."/>
            <person name="Detter J.C."/>
            <person name="Glavina del Rio T."/>
            <person name="Hammon N."/>
            <person name="Israni S."/>
            <person name="Dalin E."/>
            <person name="Tice H."/>
            <person name="Pitluck S."/>
            <person name="Chain P."/>
            <person name="Malfatti S."/>
            <person name="Shin M."/>
            <person name="Vergez L."/>
            <person name="Schmutz J."/>
            <person name="Larimer F."/>
            <person name="Land M."/>
            <person name="Hauser L."/>
            <person name="Kyrpides N."/>
            <person name="Ivanova N."/>
            <person name="Tomasz A."/>
            <person name="Richardson P."/>
        </authorList>
    </citation>
    <scope>NUCLEOTIDE SEQUENCE [LARGE SCALE GENOMIC DNA]</scope>
    <source>
        <strain>JH1</strain>
    </source>
</reference>
<organism>
    <name type="scientific">Staphylococcus aureus (strain JH1)</name>
    <dbReference type="NCBI Taxonomy" id="359787"/>
    <lineage>
        <taxon>Bacteria</taxon>
        <taxon>Bacillati</taxon>
        <taxon>Bacillota</taxon>
        <taxon>Bacilli</taxon>
        <taxon>Bacillales</taxon>
        <taxon>Staphylococcaceae</taxon>
        <taxon>Staphylococcus</taxon>
    </lineage>
</organism>
<keyword id="KW-0328">Glycosyltransferase</keyword>
<keyword id="KW-0694">RNA-binding</keyword>
<keyword id="KW-0804">Transcription</keyword>
<keyword id="KW-0805">Transcription regulation</keyword>
<keyword id="KW-0806">Transcription termination</keyword>
<keyword id="KW-0808">Transferase</keyword>
<proteinExistence type="inferred from homology"/>
<feature type="chain" id="PRO_1000085657" description="Bifunctional protein PyrR">
    <location>
        <begin position="1"/>
        <end position="175"/>
    </location>
</feature>
<feature type="short sequence motif" description="PRPP-binding" evidence="1">
    <location>
        <begin position="98"/>
        <end position="110"/>
    </location>
</feature>
<comment type="function">
    <text evidence="1">Regulates transcriptional attenuation of the pyrimidine nucleotide (pyr) operon by binding in a uridine-dependent manner to specific sites on pyr mRNA. This disrupts an antiterminator hairpin in the RNA and favors formation of a downstream transcription terminator, leading to a reduced expression of downstream genes.</text>
</comment>
<comment type="function">
    <text evidence="1">Also displays a weak uracil phosphoribosyltransferase activity which is not physiologically significant.</text>
</comment>
<comment type="catalytic activity">
    <reaction evidence="1">
        <text>UMP + diphosphate = 5-phospho-alpha-D-ribose 1-diphosphate + uracil</text>
        <dbReference type="Rhea" id="RHEA:13017"/>
        <dbReference type="ChEBI" id="CHEBI:17568"/>
        <dbReference type="ChEBI" id="CHEBI:33019"/>
        <dbReference type="ChEBI" id="CHEBI:57865"/>
        <dbReference type="ChEBI" id="CHEBI:58017"/>
        <dbReference type="EC" id="2.4.2.9"/>
    </reaction>
</comment>
<comment type="subunit">
    <text evidence="1">Homodimer and homohexamer; in equilibrium.</text>
</comment>
<comment type="similarity">
    <text evidence="1">Belongs to the purine/pyrimidine phosphoribosyltransferase family. PyrR subfamily.</text>
</comment>
<dbReference type="EC" id="2.4.2.9" evidence="1"/>
<dbReference type="EMBL" id="CP000736">
    <property type="protein sequence ID" value="ABR52135.1"/>
    <property type="molecule type" value="Genomic_DNA"/>
</dbReference>
<dbReference type="SMR" id="A6U117"/>
<dbReference type="KEGG" id="sah:SaurJH1_1282"/>
<dbReference type="HOGENOM" id="CLU_094234_2_1_9"/>
<dbReference type="GO" id="GO:0003723">
    <property type="term" value="F:RNA binding"/>
    <property type="evidence" value="ECO:0007669"/>
    <property type="project" value="UniProtKB-UniRule"/>
</dbReference>
<dbReference type="GO" id="GO:0004845">
    <property type="term" value="F:uracil phosphoribosyltransferase activity"/>
    <property type="evidence" value="ECO:0007669"/>
    <property type="project" value="UniProtKB-UniRule"/>
</dbReference>
<dbReference type="GO" id="GO:0006353">
    <property type="term" value="P:DNA-templated transcription termination"/>
    <property type="evidence" value="ECO:0007669"/>
    <property type="project" value="UniProtKB-UniRule"/>
</dbReference>
<dbReference type="CDD" id="cd06223">
    <property type="entry name" value="PRTases_typeI"/>
    <property type="match status" value="1"/>
</dbReference>
<dbReference type="FunFam" id="3.40.50.2020:FF:000020">
    <property type="entry name" value="Bifunctional protein PyrR"/>
    <property type="match status" value="1"/>
</dbReference>
<dbReference type="Gene3D" id="3.40.50.2020">
    <property type="match status" value="1"/>
</dbReference>
<dbReference type="HAMAP" id="MF_01219">
    <property type="entry name" value="PyrR"/>
    <property type="match status" value="1"/>
</dbReference>
<dbReference type="InterPro" id="IPR000836">
    <property type="entry name" value="PRibTrfase_dom"/>
</dbReference>
<dbReference type="InterPro" id="IPR029057">
    <property type="entry name" value="PRTase-like"/>
</dbReference>
<dbReference type="InterPro" id="IPR023050">
    <property type="entry name" value="PyrR"/>
</dbReference>
<dbReference type="InterPro" id="IPR050137">
    <property type="entry name" value="PyrR_bifunctional"/>
</dbReference>
<dbReference type="NCBIfam" id="NF003546">
    <property type="entry name" value="PRK05205.1-2"/>
    <property type="match status" value="1"/>
</dbReference>
<dbReference type="NCBIfam" id="NF003548">
    <property type="entry name" value="PRK05205.1-4"/>
    <property type="match status" value="1"/>
</dbReference>
<dbReference type="NCBIfam" id="NF003549">
    <property type="entry name" value="PRK05205.1-5"/>
    <property type="match status" value="1"/>
</dbReference>
<dbReference type="PANTHER" id="PTHR11608">
    <property type="entry name" value="BIFUNCTIONAL PROTEIN PYRR"/>
    <property type="match status" value="1"/>
</dbReference>
<dbReference type="PANTHER" id="PTHR11608:SF0">
    <property type="entry name" value="BIFUNCTIONAL PROTEIN PYRR"/>
    <property type="match status" value="1"/>
</dbReference>
<dbReference type="Pfam" id="PF00156">
    <property type="entry name" value="Pribosyltran"/>
    <property type="match status" value="1"/>
</dbReference>
<dbReference type="SUPFAM" id="SSF53271">
    <property type="entry name" value="PRTase-like"/>
    <property type="match status" value="1"/>
</dbReference>
<accession>A6U117</accession>
<protein>
    <recommendedName>
        <fullName evidence="1">Bifunctional protein PyrR</fullName>
    </recommendedName>
    <domain>
        <recommendedName>
            <fullName evidence="1">Pyrimidine operon regulatory protein</fullName>
        </recommendedName>
    </domain>
    <domain>
        <recommendedName>
            <fullName evidence="1">Uracil phosphoribosyltransferase</fullName>
            <shortName evidence="1">UPRTase</shortName>
            <ecNumber evidence="1">2.4.2.9</ecNumber>
        </recommendedName>
    </domain>
</protein>
<evidence type="ECO:0000255" key="1">
    <source>
        <dbReference type="HAMAP-Rule" id="MF_01219"/>
    </source>
</evidence>
<name>PYRR_STAA2</name>
<gene>
    <name evidence="1" type="primary">pyrR</name>
    <name type="ordered locus">SaurJH1_1282</name>
</gene>
<sequence length="175" mass="19855">MSERIIMDDAAIQRTVTRIAHEILEYNKGTDNLILLGIKTRGEYLANRIQDKIHQIEQQRIPTGTIDITYFRDDIEHMSSLTTKDAIDIDTDITDKVVIIIDDVLYTGRTVRASLDAILLNARPIKIGLAALVDRGHRELPIRADFVGKNIPTSKEETVSVYLEEMDQRNAVIIK</sequence>